<comment type="function">
    <text evidence="1">The heterodimer acts as both an ATP-dependent DNA helicase and an ATP-dependent, dual-direction single-stranded exonuclease. Recognizes the chi site generating a DNA molecule suitable for the initiation of homologous recombination. The AddA nuclease domain is required for chi fragment generation; this subunit has the helicase and 3' -&gt; 5' nuclease activities.</text>
</comment>
<comment type="catalytic activity">
    <reaction evidence="1">
        <text>Couples ATP hydrolysis with the unwinding of duplex DNA by translocating in the 3'-5' direction.</text>
        <dbReference type="EC" id="5.6.2.4"/>
    </reaction>
</comment>
<comment type="catalytic activity">
    <reaction evidence="1">
        <text>ATP + H2O = ADP + phosphate + H(+)</text>
        <dbReference type="Rhea" id="RHEA:13065"/>
        <dbReference type="ChEBI" id="CHEBI:15377"/>
        <dbReference type="ChEBI" id="CHEBI:15378"/>
        <dbReference type="ChEBI" id="CHEBI:30616"/>
        <dbReference type="ChEBI" id="CHEBI:43474"/>
        <dbReference type="ChEBI" id="CHEBI:456216"/>
        <dbReference type="EC" id="5.6.2.4"/>
    </reaction>
</comment>
<comment type="cofactor">
    <cofactor evidence="1">
        <name>Mg(2+)</name>
        <dbReference type="ChEBI" id="CHEBI:18420"/>
    </cofactor>
</comment>
<comment type="subunit">
    <text evidence="1">Heterodimer of AddA and AddB/RexB.</text>
</comment>
<comment type="similarity">
    <text evidence="1">Belongs to the helicase family. AddA subfamily.</text>
</comment>
<reference key="1">
    <citation type="journal article" date="2003" name="Nature">
        <title>The genome sequence of Bacillus anthracis Ames and comparison to closely related bacteria.</title>
        <authorList>
            <person name="Read T.D."/>
            <person name="Peterson S.N."/>
            <person name="Tourasse N.J."/>
            <person name="Baillie L.W."/>
            <person name="Paulsen I.T."/>
            <person name="Nelson K.E."/>
            <person name="Tettelin H."/>
            <person name="Fouts D.E."/>
            <person name="Eisen J.A."/>
            <person name="Gill S.R."/>
            <person name="Holtzapple E.K."/>
            <person name="Okstad O.A."/>
            <person name="Helgason E."/>
            <person name="Rilstone J."/>
            <person name="Wu M."/>
            <person name="Kolonay J.F."/>
            <person name="Beanan M.J."/>
            <person name="Dodson R.J."/>
            <person name="Brinkac L.M."/>
            <person name="Gwinn M.L."/>
            <person name="DeBoy R.T."/>
            <person name="Madpu R."/>
            <person name="Daugherty S.C."/>
            <person name="Durkin A.S."/>
            <person name="Haft D.H."/>
            <person name="Nelson W.C."/>
            <person name="Peterson J.D."/>
            <person name="Pop M."/>
            <person name="Khouri H.M."/>
            <person name="Radune D."/>
            <person name="Benton J.L."/>
            <person name="Mahamoud Y."/>
            <person name="Jiang L."/>
            <person name="Hance I.R."/>
            <person name="Weidman J.F."/>
            <person name="Berry K.J."/>
            <person name="Plaut R.D."/>
            <person name="Wolf A.M."/>
            <person name="Watkins K.L."/>
            <person name="Nierman W.C."/>
            <person name="Hazen A."/>
            <person name="Cline R.T."/>
            <person name="Redmond C."/>
            <person name="Thwaite J.E."/>
            <person name="White O."/>
            <person name="Salzberg S.L."/>
            <person name="Thomason B."/>
            <person name="Friedlander A.M."/>
            <person name="Koehler T.M."/>
            <person name="Hanna P.C."/>
            <person name="Kolstoe A.-B."/>
            <person name="Fraser C.M."/>
        </authorList>
    </citation>
    <scope>NUCLEOTIDE SEQUENCE [LARGE SCALE GENOMIC DNA]</scope>
    <source>
        <strain>Ames / isolate Porton</strain>
    </source>
</reference>
<reference key="2">
    <citation type="submission" date="2004-01" db="EMBL/GenBank/DDBJ databases">
        <title>Complete genome sequence of Bacillus anthracis Sterne.</title>
        <authorList>
            <person name="Brettin T.S."/>
            <person name="Bruce D."/>
            <person name="Challacombe J.F."/>
            <person name="Gilna P."/>
            <person name="Han C."/>
            <person name="Hill K."/>
            <person name="Hitchcock P."/>
            <person name="Jackson P."/>
            <person name="Keim P."/>
            <person name="Longmire J."/>
            <person name="Lucas S."/>
            <person name="Okinaka R."/>
            <person name="Richardson P."/>
            <person name="Rubin E."/>
            <person name="Tice H."/>
        </authorList>
    </citation>
    <scope>NUCLEOTIDE SEQUENCE [LARGE SCALE GENOMIC DNA]</scope>
    <source>
        <strain>Sterne</strain>
    </source>
</reference>
<reference key="3">
    <citation type="journal article" date="2009" name="J. Bacteriol.">
        <title>The complete genome sequence of Bacillus anthracis Ames 'Ancestor'.</title>
        <authorList>
            <person name="Ravel J."/>
            <person name="Jiang L."/>
            <person name="Stanley S.T."/>
            <person name="Wilson M.R."/>
            <person name="Decker R.S."/>
            <person name="Read T.D."/>
            <person name="Worsham P."/>
            <person name="Keim P.S."/>
            <person name="Salzberg S.L."/>
            <person name="Fraser-Liggett C.M."/>
            <person name="Rasko D.A."/>
        </authorList>
    </citation>
    <scope>NUCLEOTIDE SEQUENCE [LARGE SCALE GENOMIC DNA]</scope>
    <source>
        <strain>Ames ancestor</strain>
    </source>
</reference>
<name>ADDA_BACAN</name>
<proteinExistence type="inferred from homology"/>
<organism>
    <name type="scientific">Bacillus anthracis</name>
    <dbReference type="NCBI Taxonomy" id="1392"/>
    <lineage>
        <taxon>Bacteria</taxon>
        <taxon>Bacillati</taxon>
        <taxon>Bacillota</taxon>
        <taxon>Bacilli</taxon>
        <taxon>Bacillales</taxon>
        <taxon>Bacillaceae</taxon>
        <taxon>Bacillus</taxon>
        <taxon>Bacillus cereus group</taxon>
    </lineage>
</organism>
<sequence length="1241" mass="142623">MMENWPKKPEGSQWTDDQWKAVVATGRDILVAAAAGSGKTAVLVERIIKKIINEENPVDVDRLLVVTFTNAAAQEMKNRIGEALEKVLIDEPGSQHVRKQLSLLNKASISTIHSFCLQVIRGYYYMLDVDPRFRIANQTENELLKEEVLDDILEEEYGIEDNTIFFELVDRYTSDRSDDDLQRMILALHTESRAHPNPEKWLDKLVEAYDVEGKTIEDLVYASYLLEDVKFQLETAEQHIRKATELAMLPDGPAPRIETLQADLALLGTLSAAARESWTSVYEAMQNVSWQTLKRIKKSDYNEDIVKQVDSLRNKAKDEVKKLQEELFSRRPESFLRDFQDMHPVLEKLVQLVKVFTERFQAMKRDKGMVDFTDLEHFCLQILSEQSEDGEMKPSAVALQYRNKFAEVLVDEYQDTNFVQESIIKFVTKDSESEGNLFMVGDVKQSIYRFRLAEPGLFLGKYKRFTQEGLGGGMKIDLAKNFRSRHEVLAGTNFIFKQIMGEEVGEIDYDADAELKLGASYPEGEDVAAELLCIQQTEEEVIDGEEGAEVEKAQLEARLMAQRIKAMVDSGYEVYDRKTDSMRPVKYRDFVILLRSMPWAPQIMEELKLQGIPVYADLATGYFEATEVNIMMNVFRVIDNPMQDIPLAAVLRSPIVGLNDEELATLRAHGKKGSFYEVMSSFLKGAPLEEEKELHDKLEWFYNLLQGWREFARQQSLSDLIWKVYGETGYYDFVGGLPAGKQRQANLRVLYDRARQYEATSFRGLFRFLRFIERILERGDDMGTARALGEQEDVVRIMTIHKSKGLEFPVVFVAGLGRRFNTQDLMKRFLLHKDFGFGSQFIDPRKRIKYTTLSQLAIKRKMKMELIAEEMRVLYVALTRAKEKLILIGTVKDATKEMEKWLDAREHSEWLLPDHVRAGASCYLDWIAPSLYRHRDSEMLLELGQGSIPDEIYGYDTSWKVEVVDGNTLLAPEPVQEEKQELLEALREKKAVPLESERKEEVYDRLMWKYGYGEATSHRAKQSVTEIKRNYQSEEGSDNAFIKKLRAPIQTRPRFMEKKGLTYAERGTAVHAVMQHVDLKKPITVEILQEQIAGMVNKELLTFEQAEEIAIEKVISFFDSDLGKRVLAAKSVEREVPFTMMLAAEEAYQDWQGESGESILVQGVIDCMIEEEDGITLIDFKTDTIEGKFPGGFEQAKPILETRYKVQLSLYAKALEKSLQHPVKEKCLYFFDGNHVIKVEE</sequence>
<evidence type="ECO:0000255" key="1">
    <source>
        <dbReference type="HAMAP-Rule" id="MF_01451"/>
    </source>
</evidence>
<keyword id="KW-0067">ATP-binding</keyword>
<keyword id="KW-0227">DNA damage</keyword>
<keyword id="KW-0234">DNA repair</keyword>
<keyword id="KW-0238">DNA-binding</keyword>
<keyword id="KW-0269">Exonuclease</keyword>
<keyword id="KW-0347">Helicase</keyword>
<keyword id="KW-0378">Hydrolase</keyword>
<keyword id="KW-0413">Isomerase</keyword>
<keyword id="KW-0540">Nuclease</keyword>
<keyword id="KW-0547">Nucleotide-binding</keyword>
<keyword id="KW-1185">Reference proteome</keyword>
<protein>
    <recommendedName>
        <fullName evidence="1">ATP-dependent helicase/nuclease subunit A</fullName>
        <ecNumber evidence="1">3.1.-.-</ecNumber>
        <ecNumber evidence="1">5.6.2.4</ecNumber>
    </recommendedName>
    <alternativeName>
        <fullName evidence="1">ATP-dependent helicase/nuclease AddA</fullName>
    </alternativeName>
    <alternativeName>
        <fullName evidence="1">DNA 3'-5' helicase AddA</fullName>
    </alternativeName>
</protein>
<accession>Q81TW1</accession>
<accession>Q6I247</accession>
<accession>Q6KVY3</accession>
<dbReference type="EC" id="3.1.-.-" evidence="1"/>
<dbReference type="EC" id="5.6.2.4" evidence="1"/>
<dbReference type="EMBL" id="AE016879">
    <property type="protein sequence ID" value="AAP25112.1"/>
    <property type="molecule type" value="Genomic_DNA"/>
</dbReference>
<dbReference type="EMBL" id="AE017334">
    <property type="protein sequence ID" value="AAT30235.1"/>
    <property type="molecule type" value="Genomic_DNA"/>
</dbReference>
<dbReference type="EMBL" id="AE017225">
    <property type="protein sequence ID" value="AAT53384.1"/>
    <property type="molecule type" value="Genomic_DNA"/>
</dbReference>
<dbReference type="RefSeq" id="NP_843626.1">
    <property type="nucleotide sequence ID" value="NC_003997.3"/>
</dbReference>
<dbReference type="RefSeq" id="WP_000970458.1">
    <property type="nucleotide sequence ID" value="NZ_WXXJ01000044.1"/>
</dbReference>
<dbReference type="RefSeq" id="YP_027333.1">
    <property type="nucleotide sequence ID" value="NC_005945.1"/>
</dbReference>
<dbReference type="SMR" id="Q81TW1"/>
<dbReference type="IntAct" id="Q81TW1">
    <property type="interactions" value="13"/>
</dbReference>
<dbReference type="STRING" id="261594.GBAA_1142"/>
<dbReference type="GeneID" id="45021157"/>
<dbReference type="KEGG" id="ban:BA_1142"/>
<dbReference type="KEGG" id="banh:HYU01_05930"/>
<dbReference type="KEGG" id="bar:GBAA_1142"/>
<dbReference type="KEGG" id="bat:BAS1061"/>
<dbReference type="PATRIC" id="fig|198094.11.peg.1123"/>
<dbReference type="eggNOG" id="COG1074">
    <property type="taxonomic scope" value="Bacteria"/>
</dbReference>
<dbReference type="HOGENOM" id="CLU_001114_3_1_9"/>
<dbReference type="OMA" id="EFSDIAH"/>
<dbReference type="OrthoDB" id="9810135at2"/>
<dbReference type="Proteomes" id="UP000000427">
    <property type="component" value="Chromosome"/>
</dbReference>
<dbReference type="Proteomes" id="UP000000594">
    <property type="component" value="Chromosome"/>
</dbReference>
<dbReference type="GO" id="GO:0005829">
    <property type="term" value="C:cytosol"/>
    <property type="evidence" value="ECO:0007669"/>
    <property type="project" value="TreeGrafter"/>
</dbReference>
<dbReference type="GO" id="GO:0033202">
    <property type="term" value="C:DNA helicase complex"/>
    <property type="evidence" value="ECO:0007669"/>
    <property type="project" value="TreeGrafter"/>
</dbReference>
<dbReference type="GO" id="GO:0043138">
    <property type="term" value="F:3'-5' DNA helicase activity"/>
    <property type="evidence" value="ECO:0007669"/>
    <property type="project" value="UniProtKB-UniRule"/>
</dbReference>
<dbReference type="GO" id="GO:0008408">
    <property type="term" value="F:3'-5' exonuclease activity"/>
    <property type="evidence" value="ECO:0007669"/>
    <property type="project" value="UniProtKB-UniRule"/>
</dbReference>
<dbReference type="GO" id="GO:0005524">
    <property type="term" value="F:ATP binding"/>
    <property type="evidence" value="ECO:0007669"/>
    <property type="project" value="UniProtKB-UniRule"/>
</dbReference>
<dbReference type="GO" id="GO:0016887">
    <property type="term" value="F:ATP hydrolysis activity"/>
    <property type="evidence" value="ECO:0007669"/>
    <property type="project" value="RHEA"/>
</dbReference>
<dbReference type="GO" id="GO:0003690">
    <property type="term" value="F:double-stranded DNA binding"/>
    <property type="evidence" value="ECO:0007669"/>
    <property type="project" value="UniProtKB-UniRule"/>
</dbReference>
<dbReference type="GO" id="GO:0000724">
    <property type="term" value="P:double-strand break repair via homologous recombination"/>
    <property type="evidence" value="ECO:0007669"/>
    <property type="project" value="UniProtKB-UniRule"/>
</dbReference>
<dbReference type="CDD" id="cd18807">
    <property type="entry name" value="SF1_C_UvrD"/>
    <property type="match status" value="1"/>
</dbReference>
<dbReference type="FunFam" id="3.40.50.300:FF:001164">
    <property type="entry name" value="ATP-dependent helicase/nuclease subunit A"/>
    <property type="match status" value="1"/>
</dbReference>
<dbReference type="FunFam" id="3.40.50.300:FF:001187">
    <property type="entry name" value="ATP-dependent helicase/nuclease subunit A"/>
    <property type="match status" value="1"/>
</dbReference>
<dbReference type="FunFam" id="3.40.50.300:FF:001196">
    <property type="entry name" value="ATP-dependent helicase/nuclease subunit A"/>
    <property type="match status" value="1"/>
</dbReference>
<dbReference type="FunFam" id="3.40.50.300:FF:001236">
    <property type="entry name" value="ATP-dependent helicase/nuclease subunit A"/>
    <property type="match status" value="1"/>
</dbReference>
<dbReference type="Gene3D" id="3.90.320.10">
    <property type="match status" value="1"/>
</dbReference>
<dbReference type="Gene3D" id="6.10.250.2380">
    <property type="match status" value="1"/>
</dbReference>
<dbReference type="Gene3D" id="3.40.50.300">
    <property type="entry name" value="P-loop containing nucleotide triphosphate hydrolases"/>
    <property type="match status" value="4"/>
</dbReference>
<dbReference type="HAMAP" id="MF_01451">
    <property type="entry name" value="AddA"/>
    <property type="match status" value="1"/>
</dbReference>
<dbReference type="InterPro" id="IPR014152">
    <property type="entry name" value="AddA"/>
</dbReference>
<dbReference type="InterPro" id="IPR014017">
    <property type="entry name" value="DNA_helicase_UvrD-like_C"/>
</dbReference>
<dbReference type="InterPro" id="IPR000212">
    <property type="entry name" value="DNA_helicase_UvrD/REP"/>
</dbReference>
<dbReference type="InterPro" id="IPR027417">
    <property type="entry name" value="P-loop_NTPase"/>
</dbReference>
<dbReference type="InterPro" id="IPR011604">
    <property type="entry name" value="PDDEXK-like_dom_sf"/>
</dbReference>
<dbReference type="InterPro" id="IPR038726">
    <property type="entry name" value="PDDEXK_AddAB-type"/>
</dbReference>
<dbReference type="InterPro" id="IPR011335">
    <property type="entry name" value="Restrct_endonuc-II-like"/>
</dbReference>
<dbReference type="InterPro" id="IPR014016">
    <property type="entry name" value="UvrD-like_ATP-bd"/>
</dbReference>
<dbReference type="NCBIfam" id="TIGR02785">
    <property type="entry name" value="addA_Gpos"/>
    <property type="match status" value="1"/>
</dbReference>
<dbReference type="PANTHER" id="PTHR11070:SF48">
    <property type="entry name" value="ATP-DEPENDENT HELICASE_NUCLEASE SUBUNIT A"/>
    <property type="match status" value="1"/>
</dbReference>
<dbReference type="PANTHER" id="PTHR11070">
    <property type="entry name" value="UVRD / RECB / PCRA DNA HELICASE FAMILY MEMBER"/>
    <property type="match status" value="1"/>
</dbReference>
<dbReference type="Pfam" id="PF12705">
    <property type="entry name" value="PDDEXK_1"/>
    <property type="match status" value="1"/>
</dbReference>
<dbReference type="Pfam" id="PF00580">
    <property type="entry name" value="UvrD-helicase"/>
    <property type="match status" value="1"/>
</dbReference>
<dbReference type="Pfam" id="PF13361">
    <property type="entry name" value="UvrD_C"/>
    <property type="match status" value="1"/>
</dbReference>
<dbReference type="SUPFAM" id="SSF52540">
    <property type="entry name" value="P-loop containing nucleoside triphosphate hydrolases"/>
    <property type="match status" value="1"/>
</dbReference>
<dbReference type="SUPFAM" id="SSF52980">
    <property type="entry name" value="Restriction endonuclease-like"/>
    <property type="match status" value="1"/>
</dbReference>
<dbReference type="PROSITE" id="PS51198">
    <property type="entry name" value="UVRD_HELICASE_ATP_BIND"/>
    <property type="match status" value="1"/>
</dbReference>
<dbReference type="PROSITE" id="PS51217">
    <property type="entry name" value="UVRD_HELICASE_CTER"/>
    <property type="match status" value="1"/>
</dbReference>
<feature type="chain" id="PRO_0000379231" description="ATP-dependent helicase/nuclease subunit A">
    <location>
        <begin position="1"/>
        <end position="1241"/>
    </location>
</feature>
<feature type="domain" description="UvrD-like helicase ATP-binding" evidence="1">
    <location>
        <begin position="12"/>
        <end position="485"/>
    </location>
</feature>
<feature type="domain" description="UvrD-like helicase C-terminal" evidence="1">
    <location>
        <begin position="505"/>
        <end position="805"/>
    </location>
</feature>
<feature type="binding site" evidence="1">
    <location>
        <begin position="33"/>
        <end position="40"/>
    </location>
    <ligand>
        <name>ATP</name>
        <dbReference type="ChEBI" id="CHEBI:30616"/>
    </ligand>
</feature>
<gene>
    <name evidence="1" type="primary">addA</name>
    <name type="ordered locus">BA_1142</name>
    <name type="ordered locus">GBAA_1142</name>
    <name type="ordered locus">BAS1061</name>
</gene>